<feature type="chain" id="PRO_0000222169" description="RNA-directed RNA polymerase L">
    <location>
        <begin position="1"/>
        <end position="2331"/>
    </location>
</feature>
<feature type="domain" description="RdRp catalytic" evidence="4">
    <location>
        <begin position="628"/>
        <end position="812"/>
    </location>
</feature>
<feature type="domain" description="Mononegavirus-type SAM-dependent 2'-O-MTase" evidence="5">
    <location>
        <begin position="1921"/>
        <end position="2118"/>
    </location>
</feature>
<feature type="sequence variant" description="In strain: pp3/guinea pig lethal, pp4/guinea pig nonlethal and Isolate Enterlein.">
    <original>L</original>
    <variation>A</variation>
    <location>
        <position position="489"/>
    </location>
</feature>
<feature type="sequence variant" description="In strain: pp3/guinea pig lethal.">
    <original>S</original>
    <variation>C</variation>
    <location>
        <position position="741"/>
    </location>
</feature>
<feature type="sequence variant" description="In strain: pp3/guinea pig lethal, pp4/guinea pig nonlethal and Isolate Enterlein.">
    <original>R</original>
    <variation>G</variation>
    <location>
        <position position="979"/>
    </location>
</feature>
<feature type="sequence variant" description="In strain: Isolate Enterlein.">
    <original>S</original>
    <variation>T</variation>
    <location>
        <position position="1428"/>
    </location>
</feature>
<name>L_MABVM</name>
<gene>
    <name type="primary">L</name>
</gene>
<proteinExistence type="inferred from homology"/>
<sequence>MQHPTQYPDARLSSPIILDQCDLLARSLGLYSHYSHNPKLRNCRIPHHIYRLRNSTALKTFLQNCSILTVPFHSIWDHILTSIQYDAINHVDDFKYLLPSELVKYANWDNEFLKAYLNKILGLDHVFSASARSQCEDFSPKENPYYWGMLLLVHLSQLARRIKGQRGSLRSNWKFIGTDLELFGIADFVIFKVPVKTIIRNAVSLQASKPGLRIWYRDQNLTPYLCDDEFIVSVASYECFIMIKDVFIERYNTWEICARAWLEDSDGADYPPLDVLGELYNQGDQIIAMYLEDGFKLIKHLEPLCVSCIQTHGIFTPRKYWFQSQMIKSYYDELHDLNLKLQISDNKAECAQNFIKTIVQAKLTPQQYCELFSLQKHWGHPVLYNDVALDKVKKHAQSTKILKPKVMFETFCVFKFIVAKNHYHSQGSWYKTTHDLHLTPYLRQHIVSNSFPSQAEIYQHLWEWYFVEHEPLFSTKIISDLSIFIKDRLTAVNQECWDSVFDRSVLGYNPPVRFQSKRVPEQFLGQADFSLNQILEFAEKLEYLAPSYRNFSFSLKEKELNIGRTFGKLPYRVRNVQTLAEALLADGLAKAFPSNMMVVTEREQKEALLHQASWHHNSASIGENAIVRGASFVTDLEKYNLAFRYEFTRHFIDYCNRCYGVKNLFDWMHFLIPLCYMHVSDFYSPPHCVTEDNRNNPPDCANAYHYHLGGIEGLQQKLWTCISCAQITLVELKTKLKLKSSVMGDNQCITTLSLFPIDAPNDYQENEAELNAARVAVELAITTGYSGIFLKPEETFVHSGFIYFGKKQYLNGVQLPQSLKTMARCGPLSDSIFDDLQGSLASIGTSFERGTSETRHIFPSRWIASFHSMLAINLLNQNHLGFPLGFNIDISCFKKPLTFSEKLIALITPQVLGGLSFLNPEKLFYRNISDPLTSGLFQLKNALEFLEKEELFYILISKKPGLADASDFVMNPLGLNVPRSKEIITFLRQTVRENITITSQNRIINSLFHIGSDLEDQRVCEWLLSSNPVMSRFAADIFSRTPSGKRLQVLGYLEGTRTLLASRTISLTTEGTMLMKLRELTRNRWKSWFSYIDALDDDLSESLEKFTCTVDVANFLRAYSWSDVLKGKRLIGATLPCLLEQFEVKWINLSEDLREQFNLSSDSKSTINLLPYDCKELRLEGSNDTELNYVSCALDRKVVQKHPSVNRLAWTIGNRAPYIGSRTEDKIGYPPLRVNCPSAALKEAIEMVSRLLWVTQGTADREKLLIPLLNSRVNLDYQTVLNFLPTHYSGNIVHRYNDQYGQHSFMANRMSNTSTRAIISTNTLGKYAGGGQAAIDSNIIFQNTINLGVAVLDIALSLAKLSSASNVTFRLMLNKCCTRHVPSEYLYFDKPLDVDLNKYMDNELVYDNDPLCSGIKGRLGRVSRSTLSLSLNVSDIGSYDFPTIAAWTLGETIVGSIFSDESSQSTDPISSGCTKTFVTHFLVYPVESIFYAFGANLIVESLSLSRIKSIKNLSDLTFLISSTIRNLSHRSLRILQSTFRHELVLTRLAHHIPLISLMLGGSAGEKSSSDAVRLFLTASYQNFINNFSCLMKKGQSSLPVWLYFPSEGQQLKPILKILQRLSDLLSPDKIQKRKILADTCCPIGSFWVYPSKSTRTNHYYASLNYWRDKANKVKNTPFSHLINCSFPEFSSHTSSVSSNQQVTNSKYIVYPENITEINARTRLINYGSTALQGMDTKMPLSEQNLVENCRPSEGIRFKDNQKITKHDQRCEREESSPQQMFPEDNMQTPAHIHSSSPFQILIKSLDAHEDFDASKIILNSEINNLNLTEYTLNTKLLTTPTRTEILDTSPLQSSRYSSTSRERSLLSREQASYLYVDCSNIPSISLDPGFRSMSDQNQVQMLINTYKRDLHACFDSNQFCRFTGVVSSMHYKLYDLLPPGKLKKAICLAEGEGSGARLLLKWKETDYLFFNTLATDSQQEAEILSGRVIPRMLYNIDRLSALLESRRLILNNLTIQITDITNPLWLDSVIQYLPEDSDILTMDAETTKDETREQLYKTIVNIWTRTSPNIPKISIIKVFLLDYEGTLFLMKNAIQYYGQVQLKKPYSSNAKNSEWYLCCGKRRIQRLQIDFSDQVGIFLICKAMSRQRQAIPYWLKHIEKNYPASLHEFFLTLGFPSLESSFCHRYTIPFSEGKALFHKVQSYVRQGKQHLHSLMLDYENNSPLLDLRNHFICSLRGKITKYYNDILKLNLVIKAVEKGKNWSQLVEILPNMHSVCIVHVDHECSGCEKRLLLKLDFIRNTKIAEQKLLNRVIGYILFFPFGLFKSGSLRA</sequence>
<evidence type="ECO:0000250" key="1"/>
<evidence type="ECO:0000250" key="2">
    <source>
        <dbReference type="UniProtKB" id="P03523"/>
    </source>
</evidence>
<evidence type="ECO:0000250" key="3">
    <source>
        <dbReference type="UniProtKB" id="P28887"/>
    </source>
</evidence>
<evidence type="ECO:0000255" key="4">
    <source>
        <dbReference type="PROSITE-ProRule" id="PRU00539"/>
    </source>
</evidence>
<evidence type="ECO:0000255" key="5">
    <source>
        <dbReference type="PROSITE-ProRule" id="PRU00923"/>
    </source>
</evidence>
<evidence type="ECO:0000305" key="6"/>
<organismHost>
    <name type="scientific">Chlorocebus aethiops</name>
    <name type="common">Green monkey</name>
    <name type="synonym">Cercopithecus aethiops</name>
    <dbReference type="NCBI Taxonomy" id="9534"/>
</organismHost>
<organismHost>
    <name type="scientific">Homo sapiens</name>
    <name type="common">Human</name>
    <dbReference type="NCBI Taxonomy" id="9606"/>
</organismHost>
<organismHost>
    <name type="scientific">Rousettus aegyptiacus</name>
    <name type="common">Egyptian fruit bat</name>
    <name type="synonym">Pteropus aegyptiacus</name>
    <dbReference type="NCBI Taxonomy" id="9407"/>
</organismHost>
<protein>
    <recommendedName>
        <fullName>RNA-directed RNA polymerase L</fullName>
        <shortName>Protein L</shortName>
    </recommendedName>
    <alternativeName>
        <fullName>Large structural protein</fullName>
    </alternativeName>
    <alternativeName>
        <fullName>Replicase</fullName>
    </alternativeName>
    <alternativeName>
        <fullName>Transcriptase</fullName>
    </alternativeName>
    <domain>
        <recommendedName>
            <fullName>RNA-directed RNA polymerase</fullName>
            <ecNumber evidence="3">2.7.7.48</ecNumber>
        </recommendedName>
    </domain>
    <domain>
        <recommendedName>
            <fullName evidence="2">GTP phosphohydrolase</fullName>
            <ecNumber evidence="2">3.6.1.-</ecNumber>
        </recommendedName>
    </domain>
    <domain>
        <recommendedName>
            <fullName evidence="6">GDP polyribonucleotidyltransferase</fullName>
            <ecNumber evidence="2">2.7.7.88</ecNumber>
        </recommendedName>
        <alternativeName>
            <fullName evidence="6">PRNTase</fullName>
        </alternativeName>
    </domain>
    <domain>
        <recommendedName>
            <fullName evidence="6">mRNA cap methyltransferase</fullName>
            <ecNumber evidence="2">2.1.1.375</ecNumber>
        </recommendedName>
        <alternativeName>
            <fullName evidence="2">mRNA (guanine-N(7)-)-methyltransferase</fullName>
            <shortName evidence="2">G-N7-MTase</shortName>
        </alternativeName>
        <alternativeName>
            <fullName evidence="2">mRNA (nucleoside-2'-O-)-methyltransferase</fullName>
            <shortName evidence="2">N1-2'-O-MTase</shortName>
        </alternativeName>
    </domain>
</protein>
<keyword id="KW-0067">ATP-binding</keyword>
<keyword id="KW-1035">Host cytoplasm</keyword>
<keyword id="KW-0378">Hydrolase</keyword>
<keyword id="KW-0489">Methyltransferase</keyword>
<keyword id="KW-0506">mRNA capping</keyword>
<keyword id="KW-0507">mRNA processing</keyword>
<keyword id="KW-0511">Multifunctional enzyme</keyword>
<keyword id="KW-0547">Nucleotide-binding</keyword>
<keyword id="KW-0548">Nucleotidyltransferase</keyword>
<keyword id="KW-1185">Reference proteome</keyword>
<keyword id="KW-0696">RNA-directed RNA polymerase</keyword>
<keyword id="KW-0949">S-adenosyl-L-methionine</keyword>
<keyword id="KW-0808">Transferase</keyword>
<keyword id="KW-0693">Viral RNA replication</keyword>
<keyword id="KW-0946">Virion</keyword>
<reference key="1">
    <citation type="journal article" date="1992" name="Virology">
        <title>The nucleotide sequence of the L gene of Marburg virus, a filovirus: homologies with paramyxoviruses and rhabdoviruses.</title>
        <authorList>
            <person name="Muehlberger E."/>
            <person name="Sanchez A."/>
            <person name="Randolf A."/>
            <person name="Will C."/>
            <person name="Kiley M.P."/>
            <person name="Klenk H.-D."/>
            <person name="Feldmann H."/>
        </authorList>
    </citation>
    <scope>NUCLEOTIDE SEQUENCE [GENOMIC RNA]</scope>
</reference>
<reference key="2">
    <citation type="submission" date="1994-09" db="EMBL/GenBank/DDBJ databases">
        <authorList>
            <person name="Feldmann H."/>
        </authorList>
    </citation>
    <scope>SEQUENCE REVISION</scope>
</reference>
<reference key="3">
    <citation type="submission" date="2003-10" db="EMBL/GenBank/DDBJ databases">
        <authorList>
            <person name="Chain P.S.G."/>
            <person name="Malfatti S.A."/>
            <person name="Hajjaj A."/>
            <person name="Vergez L.M."/>
            <person name="Do L.H."/>
            <person name="Smith K.L."/>
            <person name="McCready P.M."/>
        </authorList>
    </citation>
    <scope>NUCLEOTIDE SEQUENCE [GENOMIC RNA]</scope>
    <source>
        <strain>pp3/guinea pig lethal</strain>
        <strain>pp4/guinea pig nonlethal</strain>
    </source>
</reference>
<reference key="4">
    <citation type="submission" date="2003-10" db="EMBL/GenBank/DDBJ databases">
        <authorList>
            <person name="Ichou M.A."/>
            <person name="Paragas J."/>
            <person name="Jahrling P.B."/>
            <person name="Ibrahim M.S."/>
            <person name="Lofts L."/>
            <person name="Hevey M."/>
            <person name="Schmaljohn A."/>
        </authorList>
    </citation>
    <scope>NUCLEOTIDE SEQUENCE [GENOMIC RNA]</scope>
    <source>
        <strain>pp3/guinea pig lethal</strain>
        <strain>pp4/guinea pig nonlethal</strain>
    </source>
</reference>
<reference key="5">
    <citation type="journal article" date="2006" name="J. Virol.">
        <title>Rescue of recombinant Marburg virus from cDNA is dependent on nucleocapsid protein VP30.</title>
        <authorList>
            <person name="Enterlein S."/>
            <person name="Volchkov V."/>
            <person name="Weik M."/>
            <person name="Kolesnikova L."/>
            <person name="Volchkova V."/>
            <person name="Klenk H.-D."/>
            <person name="Muehlberger E."/>
        </authorList>
    </citation>
    <scope>NUCLEOTIDE SEQUENCE [GENOMIC RNA]</scope>
    <source>
        <strain>Isolate Enterlein</strain>
    </source>
</reference>
<organism>
    <name type="scientific">Lake Victoria marburgvirus (strain Musoke-80)</name>
    <name type="common">MARV</name>
    <name type="synonym">Marburg virus (strain Kenya/Musoke/1980)</name>
    <dbReference type="NCBI Taxonomy" id="33727"/>
    <lineage>
        <taxon>Viruses</taxon>
        <taxon>Riboviria</taxon>
        <taxon>Orthornavirae</taxon>
        <taxon>Negarnaviricota</taxon>
        <taxon>Haploviricotina</taxon>
        <taxon>Monjiviricetes</taxon>
        <taxon>Mononegavirales</taxon>
        <taxon>Filoviridae</taxon>
        <taxon>Orthomarburgvirus</taxon>
        <taxon>Orthomarburgvirus marburgense</taxon>
    </lineage>
</organism>
<dbReference type="EC" id="2.7.7.48" evidence="3"/>
<dbReference type="EC" id="3.6.1.-" evidence="2"/>
<dbReference type="EC" id="2.7.7.88" evidence="2"/>
<dbReference type="EC" id="2.1.1.375" evidence="2"/>
<dbReference type="EMBL" id="M92834">
    <property type="protein sequence ID" value="AAA46562.1"/>
    <property type="status" value="ALT_SEQ"/>
    <property type="molecule type" value="Genomic_RNA"/>
</dbReference>
<dbReference type="EMBL" id="Z12132">
    <property type="protein sequence ID" value="CAA78120.1"/>
    <property type="molecule type" value="Genomic_DNA"/>
</dbReference>
<dbReference type="EMBL" id="AY430365">
    <property type="protein sequence ID" value="AAR85466.1"/>
    <property type="molecule type" value="Genomic_RNA"/>
</dbReference>
<dbReference type="EMBL" id="AY430366">
    <property type="protein sequence ID" value="AAR85459.1"/>
    <property type="molecule type" value="Genomic_RNA"/>
</dbReference>
<dbReference type="EMBL" id="DQ217792">
    <property type="protein sequence ID" value="ABA87130.1"/>
    <property type="molecule type" value="Genomic_RNA"/>
</dbReference>
<dbReference type="PIR" id="A42450">
    <property type="entry name" value="RRIWMV"/>
</dbReference>
<dbReference type="RefSeq" id="YP_001531159.1">
    <property type="nucleotide sequence ID" value="NC_001608.3"/>
</dbReference>
<dbReference type="SMR" id="P31352"/>
<dbReference type="ChEMBL" id="CHEMBL4523583"/>
<dbReference type="GeneID" id="920946"/>
<dbReference type="KEGG" id="vg:920946"/>
<dbReference type="Proteomes" id="UP000007771">
    <property type="component" value="Genome"/>
</dbReference>
<dbReference type="Proteomes" id="UP000137266">
    <property type="component" value="Genome"/>
</dbReference>
<dbReference type="Proteomes" id="UP000160614">
    <property type="component" value="Genome"/>
</dbReference>
<dbReference type="Proteomes" id="UP000180448">
    <property type="component" value="Segment"/>
</dbReference>
<dbReference type="GO" id="GO:0030430">
    <property type="term" value="C:host cell cytoplasm"/>
    <property type="evidence" value="ECO:0007669"/>
    <property type="project" value="UniProtKB-SubCell"/>
</dbReference>
<dbReference type="GO" id="GO:0019013">
    <property type="term" value="C:viral nucleocapsid"/>
    <property type="evidence" value="ECO:0000314"/>
    <property type="project" value="CACAO"/>
</dbReference>
<dbReference type="GO" id="GO:0005524">
    <property type="term" value="F:ATP binding"/>
    <property type="evidence" value="ECO:0007669"/>
    <property type="project" value="UniProtKB-KW"/>
</dbReference>
<dbReference type="GO" id="GO:0003924">
    <property type="term" value="F:GTPase activity"/>
    <property type="evidence" value="ECO:0007669"/>
    <property type="project" value="RHEA"/>
</dbReference>
<dbReference type="GO" id="GO:0004482">
    <property type="term" value="F:mRNA 5'-cap (guanine-N7-)-methyltransferase activity"/>
    <property type="evidence" value="ECO:0007669"/>
    <property type="project" value="InterPro"/>
</dbReference>
<dbReference type="GO" id="GO:0003968">
    <property type="term" value="F:RNA-directed RNA polymerase activity"/>
    <property type="evidence" value="ECO:0007669"/>
    <property type="project" value="UniProtKB-KW"/>
</dbReference>
<dbReference type="GO" id="GO:0039689">
    <property type="term" value="P:negative stranded viral RNA replication"/>
    <property type="evidence" value="ECO:0000314"/>
    <property type="project" value="UniProtKB"/>
</dbReference>
<dbReference type="GO" id="GO:0039697">
    <property type="term" value="P:negative stranded viral RNA transcription"/>
    <property type="evidence" value="ECO:0000314"/>
    <property type="project" value="UniProtKB"/>
</dbReference>
<dbReference type="InterPro" id="IPR039736">
    <property type="entry name" value="L_poly_C"/>
</dbReference>
<dbReference type="InterPro" id="IPR026890">
    <property type="entry name" value="Mononeg_mRNAcap"/>
</dbReference>
<dbReference type="InterPro" id="IPR014023">
    <property type="entry name" value="Mononeg_RNA_pol_cat"/>
</dbReference>
<dbReference type="InterPro" id="IPR025786">
    <property type="entry name" value="Mononega_L_MeTrfase"/>
</dbReference>
<dbReference type="InterPro" id="IPR017235">
    <property type="entry name" value="RNA-dir_pol_L_filovirus"/>
</dbReference>
<dbReference type="NCBIfam" id="TIGR04198">
    <property type="entry name" value="paramyx_RNAcap"/>
    <property type="match status" value="1"/>
</dbReference>
<dbReference type="Pfam" id="PF14318">
    <property type="entry name" value="Mononeg_mRNAcap"/>
    <property type="match status" value="1"/>
</dbReference>
<dbReference type="Pfam" id="PF00946">
    <property type="entry name" value="Mononeg_RNA_pol"/>
    <property type="match status" value="1"/>
</dbReference>
<dbReference type="PIRSF" id="PIRSF037548">
    <property type="entry name" value="RNA_pol_Filoviridae"/>
    <property type="match status" value="1"/>
</dbReference>
<dbReference type="PROSITE" id="PS50526">
    <property type="entry name" value="RDRP_SSRNA_NEG_NONSEG"/>
    <property type="match status" value="1"/>
</dbReference>
<dbReference type="PROSITE" id="PS51590">
    <property type="entry name" value="SAM_MT_MNV_L"/>
    <property type="match status" value="1"/>
</dbReference>
<comment type="function">
    <text evidence="2">RNA-directed RNA polymerase that catalyzes the transcription of viral mRNAs, their capping and polyadenylation. The template is composed of the viral RNA tightly encapsidated by the nucleoprotein (N). The viral polymerase binds to the genomic RNA at the 3' leader promoter, and transcribes subsequently all viral mRNAs with a decreasing efficiency. The first gene is the most transcribed, and the last the least transcribed. The viral phosphoprotein acts as a processivity factor. Capping is concomitant with initiation of mRNA transcription. Indeed, a GDP polyribonucleotidyl transferase (PRNTase) adds the cap structure when the nascent RNA chain length has reached few nucleotides. Ribose 2'-O methylation of viral mRNA cap precedes and facilitates subsequent guanine-N-7 methylation, both activities being carried by the viral polymerase. Polyadenylation of mRNAs occur by a stuttering mechanism at a slipery stop site present at the end viral genes. After finishing transcription of a mRNA, the polymerase can resume transcription of the downstream gene.</text>
</comment>
<comment type="function">
    <text evidence="2">RNA-directed RNA polymerase that catalyzes the replication of viral genomic RNA. The template is composed of the viral RNA tightly encapsidated by the nucleoprotein (N). The replicase mode is dependent on intracellular N protein concentration. In this mode, the polymerase replicates the whole viral genome without recognizing transcriptional signals, and the replicated genome is not caped or polyadenylated.</text>
</comment>
<comment type="catalytic activity">
    <reaction evidence="4">
        <text>RNA(n) + a ribonucleoside 5'-triphosphate = RNA(n+1) + diphosphate</text>
        <dbReference type="Rhea" id="RHEA:21248"/>
        <dbReference type="Rhea" id="RHEA-COMP:14527"/>
        <dbReference type="Rhea" id="RHEA-COMP:17342"/>
        <dbReference type="ChEBI" id="CHEBI:33019"/>
        <dbReference type="ChEBI" id="CHEBI:61557"/>
        <dbReference type="ChEBI" id="CHEBI:140395"/>
        <dbReference type="EC" id="2.7.7.48"/>
    </reaction>
</comment>
<comment type="catalytic activity">
    <reaction evidence="2">
        <text>a 5'-end (5'-triphosphoguanosine)-adenylyl-adenylyl-cytidylyl-adenosine in mRNA + 2 S-adenosyl-L-methionine = a 5'-end (N(7)-methyl 5'-triphosphoguanosine)-(2'-O-methyladenylyl)-adenylyl-cytidylyl-adenosine in mRNA + 2 S-adenosyl-L-homocysteine + H(+)</text>
        <dbReference type="Rhea" id="RHEA:65376"/>
        <dbReference type="Rhea" id="RHEA-COMP:16797"/>
        <dbReference type="Rhea" id="RHEA-COMP:16798"/>
        <dbReference type="ChEBI" id="CHEBI:15378"/>
        <dbReference type="ChEBI" id="CHEBI:57856"/>
        <dbReference type="ChEBI" id="CHEBI:59789"/>
        <dbReference type="ChEBI" id="CHEBI:156483"/>
        <dbReference type="ChEBI" id="CHEBI:156484"/>
        <dbReference type="EC" id="2.1.1.375"/>
    </reaction>
</comment>
<comment type="catalytic activity">
    <reaction evidence="2">
        <text>a 5'-end (5'-triphosphoguanosine)-adenylyl-adenylyl-cytidylyl-adenosine in mRNA + S-adenosyl-L-methionine = a 5'-end (5'-triphosphoguanosine)-(2'-O-methyladenylyl)-adenylyl-cytidylyl-adenosine in mRNA + S-adenosyl-L-homocysteine + H(+)</text>
        <dbReference type="Rhea" id="RHEA:65380"/>
        <dbReference type="Rhea" id="RHEA-COMP:16797"/>
        <dbReference type="Rhea" id="RHEA-COMP:16801"/>
        <dbReference type="ChEBI" id="CHEBI:15378"/>
        <dbReference type="ChEBI" id="CHEBI:57856"/>
        <dbReference type="ChEBI" id="CHEBI:59789"/>
        <dbReference type="ChEBI" id="CHEBI:156482"/>
        <dbReference type="ChEBI" id="CHEBI:156484"/>
    </reaction>
</comment>
<comment type="catalytic activity">
    <reaction evidence="3">
        <text>a 5'-end triphospho-adenylyl-adenylyl-cytidylyl-adenosine in mRNA + GDP + H(+) = a 5'-end (5'-triphosphoguanosine)-adenylyl-adenylyl-cytidylyl-adenosine in mRNA + diphosphate</text>
        <dbReference type="Rhea" id="RHEA:65436"/>
        <dbReference type="Rhea" id="RHEA-COMP:16797"/>
        <dbReference type="Rhea" id="RHEA-COMP:16799"/>
        <dbReference type="ChEBI" id="CHEBI:15378"/>
        <dbReference type="ChEBI" id="CHEBI:33019"/>
        <dbReference type="ChEBI" id="CHEBI:58189"/>
        <dbReference type="ChEBI" id="CHEBI:156484"/>
        <dbReference type="ChEBI" id="CHEBI:156503"/>
        <dbReference type="EC" id="2.7.7.88"/>
    </reaction>
</comment>
<comment type="catalytic activity">
    <reaction evidence="2">
        <text>a 5'-end (5'-triphosphoguanosine)-(2'-O-methyladenylyl)-adenylyl-cytidylyl-adenosine in mRNA + S-adenosyl-L-methionine = a 5'-end (N(7)-methyl 5'-triphosphoguanosine)-(2'-O-methyladenylyl)-adenylyl-cytidylyl-adenosine in mRNA + S-adenosyl-L-homocysteine</text>
        <dbReference type="Rhea" id="RHEA:65440"/>
        <dbReference type="Rhea" id="RHEA-COMP:16798"/>
        <dbReference type="Rhea" id="RHEA-COMP:16801"/>
        <dbReference type="ChEBI" id="CHEBI:57856"/>
        <dbReference type="ChEBI" id="CHEBI:59789"/>
        <dbReference type="ChEBI" id="CHEBI:156482"/>
        <dbReference type="ChEBI" id="CHEBI:156483"/>
    </reaction>
</comment>
<comment type="catalytic activity">
    <reaction evidence="3">
        <text>GTP + H2O = GDP + phosphate + H(+)</text>
        <dbReference type="Rhea" id="RHEA:19669"/>
        <dbReference type="ChEBI" id="CHEBI:15377"/>
        <dbReference type="ChEBI" id="CHEBI:15378"/>
        <dbReference type="ChEBI" id="CHEBI:37565"/>
        <dbReference type="ChEBI" id="CHEBI:43474"/>
        <dbReference type="ChEBI" id="CHEBI:58189"/>
    </reaction>
</comment>
<comment type="subcellular location">
    <subcellularLocation>
        <location>Host cytoplasm</location>
    </subcellularLocation>
    <subcellularLocation>
        <location evidence="1">Virion</location>
    </subcellularLocation>
</comment>
<accession>P31352</accession>
<accession>Q38L39</accession>
<accession>Q6T6T7</accession>
<accession>Q6T6U4</accession>